<gene>
    <name type="primary">adrm1-b</name>
</gene>
<protein>
    <recommendedName>
        <fullName>Proteasomal ubiquitin receptor ADRM1-B</fullName>
    </recommendedName>
</protein>
<name>ADM1B_XENLA</name>
<dbReference type="EMBL" id="BC045042">
    <property type="protein sequence ID" value="AAH45042.1"/>
    <property type="molecule type" value="mRNA"/>
</dbReference>
<dbReference type="EMBL" id="BC106295">
    <property type="protein sequence ID" value="AAI06296.1"/>
    <property type="molecule type" value="mRNA"/>
</dbReference>
<dbReference type="RefSeq" id="NP_001079594.1">
    <property type="nucleotide sequence ID" value="NM_001086125.1"/>
</dbReference>
<dbReference type="RefSeq" id="XP_018089504.1">
    <property type="nucleotide sequence ID" value="XM_018234015.1"/>
</dbReference>
<dbReference type="SMR" id="Q7ZXD6"/>
<dbReference type="DNASU" id="379281"/>
<dbReference type="GeneID" id="379281"/>
<dbReference type="KEGG" id="xla:379281"/>
<dbReference type="AGR" id="Xenbase:XB-GENE-865867"/>
<dbReference type="CTD" id="379281"/>
<dbReference type="Xenbase" id="XB-GENE-865867">
    <property type="gene designation" value="adrm1.L"/>
</dbReference>
<dbReference type="OMA" id="SNQRHFF"/>
<dbReference type="OrthoDB" id="340431at2759"/>
<dbReference type="Proteomes" id="UP000186698">
    <property type="component" value="Chromosome 9_10L"/>
</dbReference>
<dbReference type="Bgee" id="379281">
    <property type="expression patterns" value="Expressed in muscle tissue and 20 other cell types or tissues"/>
</dbReference>
<dbReference type="GO" id="GO:0005737">
    <property type="term" value="C:cytoplasm"/>
    <property type="evidence" value="ECO:0007669"/>
    <property type="project" value="UniProtKB-SubCell"/>
</dbReference>
<dbReference type="GO" id="GO:0005634">
    <property type="term" value="C:nucleus"/>
    <property type="evidence" value="ECO:0007669"/>
    <property type="project" value="UniProtKB-SubCell"/>
</dbReference>
<dbReference type="GO" id="GO:0000502">
    <property type="term" value="C:proteasome complex"/>
    <property type="evidence" value="ECO:0000250"/>
    <property type="project" value="UniProtKB"/>
</dbReference>
<dbReference type="GO" id="GO:0008541">
    <property type="term" value="C:proteasome regulatory particle, lid subcomplex"/>
    <property type="evidence" value="ECO:0000318"/>
    <property type="project" value="GO_Central"/>
</dbReference>
<dbReference type="GO" id="GO:0061133">
    <property type="term" value="F:endopeptidase activator activity"/>
    <property type="evidence" value="ECO:0000250"/>
    <property type="project" value="UniProtKB"/>
</dbReference>
<dbReference type="GO" id="GO:0070628">
    <property type="term" value="F:proteasome binding"/>
    <property type="evidence" value="ECO:0000318"/>
    <property type="project" value="GO_Central"/>
</dbReference>
<dbReference type="GO" id="GO:0043248">
    <property type="term" value="P:proteasome assembly"/>
    <property type="evidence" value="ECO:0000250"/>
    <property type="project" value="UniProtKB"/>
</dbReference>
<dbReference type="CDD" id="cd13314">
    <property type="entry name" value="PH_Rpn13"/>
    <property type="match status" value="1"/>
</dbReference>
<dbReference type="FunFam" id="1.10.2020.20:FF:000001">
    <property type="entry name" value="Proteasomal ubiquitin receptor ADRM1"/>
    <property type="match status" value="1"/>
</dbReference>
<dbReference type="FunFam" id="2.30.29.70:FF:000001">
    <property type="entry name" value="Proteasomal ubiquitin receptor ADRM1"/>
    <property type="match status" value="1"/>
</dbReference>
<dbReference type="Gene3D" id="1.10.2020.20">
    <property type="match status" value="1"/>
</dbReference>
<dbReference type="Gene3D" id="2.30.29.70">
    <property type="entry name" value="Proteasomal ubiquitin receptor Rpn13/ADRM1"/>
    <property type="match status" value="1"/>
</dbReference>
<dbReference type="InterPro" id="IPR044867">
    <property type="entry name" value="DEUBAD_dom"/>
</dbReference>
<dbReference type="InterPro" id="IPR006773">
    <property type="entry name" value="Rpn13/ADRM1"/>
</dbReference>
<dbReference type="InterPro" id="IPR044868">
    <property type="entry name" value="Rpn13/ADRM1_Pru"/>
</dbReference>
<dbReference type="InterPro" id="IPR038633">
    <property type="entry name" value="Rpn13/ADRM1_Pru_sf"/>
</dbReference>
<dbReference type="InterPro" id="IPR032368">
    <property type="entry name" value="RPN13_DEUBAD"/>
</dbReference>
<dbReference type="InterPro" id="IPR038108">
    <property type="entry name" value="RPN13_DEUBAD_sf"/>
</dbReference>
<dbReference type="PANTHER" id="PTHR12225">
    <property type="entry name" value="ADHESION REGULATING MOLECULE 1 110 KDA CELL MEMBRANE GLYCOPROTEIN"/>
    <property type="match status" value="1"/>
</dbReference>
<dbReference type="PANTHER" id="PTHR12225:SF0">
    <property type="entry name" value="PROTEASOMAL UBIQUITIN RECEPTOR ADRM1"/>
    <property type="match status" value="1"/>
</dbReference>
<dbReference type="Pfam" id="PF04683">
    <property type="entry name" value="Rpn13_ADRM1_Pru"/>
    <property type="match status" value="1"/>
</dbReference>
<dbReference type="Pfam" id="PF16550">
    <property type="entry name" value="RPN13_C"/>
    <property type="match status" value="1"/>
</dbReference>
<dbReference type="PROSITE" id="PS51916">
    <property type="entry name" value="DEUBAD"/>
    <property type="match status" value="1"/>
</dbReference>
<dbReference type="PROSITE" id="PS51917">
    <property type="entry name" value="PRU"/>
    <property type="match status" value="1"/>
</dbReference>
<accession>Q7ZXD6</accession>
<proteinExistence type="evidence at transcript level"/>
<comment type="function">
    <text evidence="1">Component of the 26S proteasome, a multiprotein complex involved in the ATP-dependent degradation of ubiquitinated proteins. This complex plays a key role in the maintenance of protein homeostasis by removing misfolded or damaged proteins, which could impair cellular functions, and by removing proteins whose functions are no longer required. Therefore, the proteasome participates in numerous cellular processes, including cell cycle progression, apoptosis, or DNA damage repair. Within the complex, functions as a proteasomal ubiquitin receptor.</text>
</comment>
<comment type="subunit">
    <text evidence="1">Component of the 19S proteasome regulatory particle complex. The 26S proteasome consists of a 20S core particle (CP) and two 19S regulatory subunits (RP).</text>
</comment>
<comment type="subcellular location">
    <subcellularLocation>
        <location evidence="1">Cytoplasm</location>
    </subcellularLocation>
    <subcellularLocation>
        <location evidence="1">Nucleus</location>
    </subcellularLocation>
</comment>
<comment type="similarity">
    <text evidence="5">Belongs to the ADRM1 family.</text>
</comment>
<sequence>MSSGALFPSLVPGSRGSSSKYLVEFRAGKMSLKGSTVTPDKRKGLVYIQQTDDSLIHFCWKDRTSGSVDDDLIIFPDDCEFKRVSQCTTGRVYVLKFKAGSKRLFFWMQEPKTDKDEEHCRKVNEYLNNPPMPGALGGSGSGSHELSALGGEGGLQSLLGNMSHNQLMQLIGPTGLGGLGGLGALTGPGLASLLGSGGPTTSSSSSSSRSQSAAVTPSSTTSSTRTTSAPVAPAAAPATTPSPAVSSNDGASAATSPTQAIQLSDLQNILATMNVPATGEGGQQVDLASVLTPEIMAPILANAEVQERLMPYLPSGESLPQTADEIQNTLTSPQFQQALSMFSAALASGQLGPLMSQFGLPADAVDAANKGDIEAFAKAMQSTSSQKERESSEKKEEEEDMSLD</sequence>
<keyword id="KW-0963">Cytoplasm</keyword>
<keyword id="KW-0539">Nucleus</keyword>
<keyword id="KW-0647">Proteasome</keyword>
<keyword id="KW-1185">Reference proteome</keyword>
<organism>
    <name type="scientific">Xenopus laevis</name>
    <name type="common">African clawed frog</name>
    <dbReference type="NCBI Taxonomy" id="8355"/>
    <lineage>
        <taxon>Eukaryota</taxon>
        <taxon>Metazoa</taxon>
        <taxon>Chordata</taxon>
        <taxon>Craniata</taxon>
        <taxon>Vertebrata</taxon>
        <taxon>Euteleostomi</taxon>
        <taxon>Amphibia</taxon>
        <taxon>Batrachia</taxon>
        <taxon>Anura</taxon>
        <taxon>Pipoidea</taxon>
        <taxon>Pipidae</taxon>
        <taxon>Xenopodinae</taxon>
        <taxon>Xenopus</taxon>
        <taxon>Xenopus</taxon>
    </lineage>
</organism>
<feature type="chain" id="PRO_0000286073" description="Proteasomal ubiquitin receptor ADRM1-B">
    <location>
        <begin position="1"/>
        <end position="404"/>
    </location>
</feature>
<feature type="domain" description="Pru" evidence="3">
    <location>
        <begin position="17"/>
        <end position="130"/>
    </location>
</feature>
<feature type="domain" description="DEUBAD" evidence="2">
    <location>
        <begin position="278"/>
        <end position="390"/>
    </location>
</feature>
<feature type="region of interest" description="Disordered" evidence="4">
    <location>
        <begin position="128"/>
        <end position="149"/>
    </location>
</feature>
<feature type="region of interest" description="Disordered" evidence="4">
    <location>
        <begin position="195"/>
        <end position="258"/>
    </location>
</feature>
<feature type="region of interest" description="Disordered" evidence="4">
    <location>
        <begin position="376"/>
        <end position="404"/>
    </location>
</feature>
<feature type="compositionally biased region" description="Low complexity" evidence="4">
    <location>
        <begin position="195"/>
        <end position="247"/>
    </location>
</feature>
<feature type="compositionally biased region" description="Polar residues" evidence="4">
    <location>
        <begin position="248"/>
        <end position="258"/>
    </location>
</feature>
<feature type="compositionally biased region" description="Basic and acidic residues" evidence="4">
    <location>
        <begin position="386"/>
        <end position="395"/>
    </location>
</feature>
<evidence type="ECO:0000250" key="1">
    <source>
        <dbReference type="UniProtKB" id="Q16186"/>
    </source>
</evidence>
<evidence type="ECO:0000255" key="2">
    <source>
        <dbReference type="PROSITE-ProRule" id="PRU01264"/>
    </source>
</evidence>
<evidence type="ECO:0000255" key="3">
    <source>
        <dbReference type="PROSITE-ProRule" id="PRU01265"/>
    </source>
</evidence>
<evidence type="ECO:0000256" key="4">
    <source>
        <dbReference type="SAM" id="MobiDB-lite"/>
    </source>
</evidence>
<evidence type="ECO:0000305" key="5"/>
<reference key="1">
    <citation type="submission" date="2005-10" db="EMBL/GenBank/DDBJ databases">
        <authorList>
            <consortium name="NIH - Xenopus Gene Collection (XGC) project"/>
        </authorList>
    </citation>
    <scope>NUCLEOTIDE SEQUENCE [LARGE SCALE MRNA]</scope>
    <source>
        <tissue>Embryo</tissue>
        <tissue>Testis</tissue>
    </source>
</reference>